<organism>
    <name type="scientific">Bradyrhizobium sp. (strain BTAi1 / ATCC BAA-1182)</name>
    <dbReference type="NCBI Taxonomy" id="288000"/>
    <lineage>
        <taxon>Bacteria</taxon>
        <taxon>Pseudomonadati</taxon>
        <taxon>Pseudomonadota</taxon>
        <taxon>Alphaproteobacteria</taxon>
        <taxon>Hyphomicrobiales</taxon>
        <taxon>Nitrobacteraceae</taxon>
        <taxon>Bradyrhizobium</taxon>
    </lineage>
</organism>
<keyword id="KW-1185">Reference proteome</keyword>
<name>Y6866_BRASB</name>
<proteinExistence type="inferred from homology"/>
<feature type="chain" id="PRO_1000046956" description="UPF0335 protein BBta_6866">
    <location>
        <begin position="1"/>
        <end position="91"/>
    </location>
</feature>
<dbReference type="EMBL" id="CP000494">
    <property type="protein sequence ID" value="ABQ38753.1"/>
    <property type="molecule type" value="Genomic_DNA"/>
</dbReference>
<dbReference type="RefSeq" id="WP_012046687.1">
    <property type="nucleotide sequence ID" value="NC_009485.1"/>
</dbReference>
<dbReference type="SMR" id="A5ERF9"/>
<dbReference type="STRING" id="288000.BBta_6866"/>
<dbReference type="KEGG" id="bbt:BBta_6866"/>
<dbReference type="eggNOG" id="COG3750">
    <property type="taxonomic scope" value="Bacteria"/>
</dbReference>
<dbReference type="HOGENOM" id="CLU_158651_2_0_5"/>
<dbReference type="OrthoDB" id="9813793at2"/>
<dbReference type="Proteomes" id="UP000000246">
    <property type="component" value="Chromosome"/>
</dbReference>
<dbReference type="GO" id="GO:0003677">
    <property type="term" value="F:DNA binding"/>
    <property type="evidence" value="ECO:0007669"/>
    <property type="project" value="InterPro"/>
</dbReference>
<dbReference type="HAMAP" id="MF_00797">
    <property type="entry name" value="UPF0335"/>
    <property type="match status" value="1"/>
</dbReference>
<dbReference type="InterPro" id="IPR018753">
    <property type="entry name" value="GapR-like"/>
</dbReference>
<dbReference type="InterPro" id="IPR046367">
    <property type="entry name" value="GapR-like_DNA-bd"/>
</dbReference>
<dbReference type="NCBIfam" id="NF010247">
    <property type="entry name" value="PRK13694.1"/>
    <property type="match status" value="1"/>
</dbReference>
<dbReference type="Pfam" id="PF10073">
    <property type="entry name" value="GapR_DNA-bd"/>
    <property type="match status" value="1"/>
</dbReference>
<accession>A5ERF9</accession>
<reference key="1">
    <citation type="journal article" date="2007" name="Science">
        <title>Legumes symbioses: absence of nod genes in photosynthetic bradyrhizobia.</title>
        <authorList>
            <person name="Giraud E."/>
            <person name="Moulin L."/>
            <person name="Vallenet D."/>
            <person name="Barbe V."/>
            <person name="Cytryn E."/>
            <person name="Avarre J.-C."/>
            <person name="Jaubert M."/>
            <person name="Simon D."/>
            <person name="Cartieaux F."/>
            <person name="Prin Y."/>
            <person name="Bena G."/>
            <person name="Hannibal L."/>
            <person name="Fardoux J."/>
            <person name="Kojadinovic M."/>
            <person name="Vuillet L."/>
            <person name="Lajus A."/>
            <person name="Cruveiller S."/>
            <person name="Rouy Z."/>
            <person name="Mangenot S."/>
            <person name="Segurens B."/>
            <person name="Dossat C."/>
            <person name="Franck W.L."/>
            <person name="Chang W.-S."/>
            <person name="Saunders E."/>
            <person name="Bruce D."/>
            <person name="Richardson P."/>
            <person name="Normand P."/>
            <person name="Dreyfus B."/>
            <person name="Pignol D."/>
            <person name="Stacey G."/>
            <person name="Emerich D."/>
            <person name="Vermeglio A."/>
            <person name="Medigue C."/>
            <person name="Sadowsky M."/>
        </authorList>
    </citation>
    <scope>NUCLEOTIDE SEQUENCE [LARGE SCALE GENOMIC DNA]</scope>
    <source>
        <strain>BTAi1 / ATCC BAA-1182</strain>
    </source>
</reference>
<sequence length="91" mass="10374">MATSAAAKDDDSPATRFAVDQLRSIIERIERLEEEKKAISEDIKDVYAESKGNGFDVKALRTIIRLRKQDPNERQEEESILETYMQALGMV</sequence>
<evidence type="ECO:0000255" key="1">
    <source>
        <dbReference type="HAMAP-Rule" id="MF_00797"/>
    </source>
</evidence>
<gene>
    <name type="ordered locus">BBta_6866</name>
</gene>
<protein>
    <recommendedName>
        <fullName evidence="1">UPF0335 protein BBta_6866</fullName>
    </recommendedName>
</protein>
<comment type="similarity">
    <text evidence="1">Belongs to the UPF0335 family.</text>
</comment>